<evidence type="ECO:0000255" key="1"/>
<evidence type="ECO:0000269" key="2">
    <source>
    </source>
</evidence>
<evidence type="ECO:0000269" key="3">
    <source>
    </source>
</evidence>
<evidence type="ECO:0000269" key="4">
    <source>
    </source>
</evidence>
<evidence type="ECO:0000269" key="5">
    <source>
    </source>
</evidence>
<evidence type="ECO:0000303" key="6">
    <source>
    </source>
</evidence>
<evidence type="ECO:0000305" key="7"/>
<evidence type="ECO:0000305" key="8">
    <source>
    </source>
</evidence>
<evidence type="ECO:0000305" key="9">
    <source>
    </source>
</evidence>
<evidence type="ECO:0000312" key="10">
    <source>
        <dbReference type="RGD" id="708363"/>
    </source>
</evidence>
<accession>P51869</accession>
<name>CP4F4_RAT</name>
<sequence>MPQLDLSWLGLRLETSLPWLLLLLIGASWLLVRVLTQTYIFYRTYQHLCDFPQPPKWNWFLGHLGMITPTEQGLKQVTKLVATYPQGFMTWLGPILPIITLCHPDVIRSVLSASASVALKEVIFYSFLKPWLGDGLLLSDGDKWSCHRRMLTPAFHFNILKPYVKIFNDSTNIMHAKWQDLASGGSARLDMFKNISLMTLDSLQKCVFSFDSNCQEKPSEYISAILELSALVAKRYQQLLLHTDSLYQLTHNGRRFHKACKLVHNFTDAVIQGRRRALPSQHEDDILKAKARSKTLDFIDVLLLTKDEDGKELSDEDIRAEADTFMFEGHDTTASGLSWILYNLARHPEYQERCRQEVRELLRDRESTEIEWDDLAQLPFLTMCIKESLRLHPPVTVISRRCTQDIVLPDGRVIPKGVICIINIFATHHNPTVWPDPEVYDPFRFDPENIKDRSPLAFIPFSAGPRNCIGQTFAMNEMKVALALTLLRFRVLPDDKEPRRKPELILRAEGGLWLRVEPLSTQ</sequence>
<keyword id="KW-0256">Endoplasmic reticulum</keyword>
<keyword id="KW-0349">Heme</keyword>
<keyword id="KW-0408">Iron</keyword>
<keyword id="KW-0472">Membrane</keyword>
<keyword id="KW-0479">Metal-binding</keyword>
<keyword id="KW-0492">Microsome</keyword>
<keyword id="KW-0503">Monooxygenase</keyword>
<keyword id="KW-0560">Oxidoreductase</keyword>
<keyword id="KW-1185">Reference proteome</keyword>
<keyword id="KW-0812">Transmembrane</keyword>
<keyword id="KW-1133">Transmembrane helix</keyword>
<organism>
    <name type="scientific">Rattus norvegicus</name>
    <name type="common">Rat</name>
    <dbReference type="NCBI Taxonomy" id="10116"/>
    <lineage>
        <taxon>Eukaryota</taxon>
        <taxon>Metazoa</taxon>
        <taxon>Chordata</taxon>
        <taxon>Craniata</taxon>
        <taxon>Vertebrata</taxon>
        <taxon>Euteleostomi</taxon>
        <taxon>Mammalia</taxon>
        <taxon>Eutheria</taxon>
        <taxon>Euarchontoglires</taxon>
        <taxon>Glires</taxon>
        <taxon>Rodentia</taxon>
        <taxon>Myomorpha</taxon>
        <taxon>Muroidea</taxon>
        <taxon>Muridae</taxon>
        <taxon>Murinae</taxon>
        <taxon>Rattus</taxon>
    </lineage>
</organism>
<proteinExistence type="evidence at protein level"/>
<dbReference type="EC" id="1.14.14.94" evidence="3"/>
<dbReference type="EMBL" id="U39206">
    <property type="protein sequence ID" value="AAC52358.1"/>
    <property type="molecule type" value="mRNA"/>
</dbReference>
<dbReference type="PIR" id="JC4532">
    <property type="entry name" value="JC4532"/>
</dbReference>
<dbReference type="RefSeq" id="NP_775146.1">
    <property type="nucleotide sequence ID" value="NM_173123.1"/>
</dbReference>
<dbReference type="SMR" id="P51869"/>
<dbReference type="FunCoup" id="P51869">
    <property type="interactions" value="52"/>
</dbReference>
<dbReference type="STRING" id="10116.ENSRNOP00000039545"/>
<dbReference type="ChEMBL" id="CHEMBL3509597"/>
<dbReference type="SwissLipids" id="SLP:000001704"/>
<dbReference type="PaxDb" id="10116-ENSRNOP00000039545"/>
<dbReference type="GeneID" id="286904"/>
<dbReference type="KEGG" id="rno:286904"/>
<dbReference type="UCSC" id="RGD:708363">
    <property type="organism name" value="rat"/>
</dbReference>
<dbReference type="AGR" id="RGD:708363"/>
<dbReference type="CTD" id="286904"/>
<dbReference type="RGD" id="708363">
    <property type="gene designation" value="Cyp4f4"/>
</dbReference>
<dbReference type="VEuPathDB" id="HostDB:ENSRNOG00000032895"/>
<dbReference type="eggNOG" id="KOG0157">
    <property type="taxonomic scope" value="Eukaryota"/>
</dbReference>
<dbReference type="HOGENOM" id="CLU_001570_5_1_1"/>
<dbReference type="InParanoid" id="P51869"/>
<dbReference type="OrthoDB" id="6056at9989"/>
<dbReference type="Reactome" id="R-RNO-211935">
    <property type="pathway name" value="Fatty acids"/>
</dbReference>
<dbReference type="Reactome" id="R-RNO-211958">
    <property type="pathway name" value="Miscellaneous substrates"/>
</dbReference>
<dbReference type="Reactome" id="R-RNO-211979">
    <property type="pathway name" value="Eicosanoids"/>
</dbReference>
<dbReference type="Reactome" id="R-RNO-2142691">
    <property type="pathway name" value="Synthesis of Leukotrienes (LT) and Eoxins (EX)"/>
</dbReference>
<dbReference type="Reactome" id="R-RNO-2142816">
    <property type="pathway name" value="Synthesis of (16-20)-hydroxyeicosatetraenoic acids (HETE)"/>
</dbReference>
<dbReference type="PRO" id="PR:P51869"/>
<dbReference type="Proteomes" id="UP000002494">
    <property type="component" value="Chromosome 7"/>
</dbReference>
<dbReference type="Bgee" id="ENSRNOG00000032895">
    <property type="expression patterns" value="Expressed in liver and 11 other cell types or tissues"/>
</dbReference>
<dbReference type="GO" id="GO:0005789">
    <property type="term" value="C:endoplasmic reticulum membrane"/>
    <property type="evidence" value="ECO:0007669"/>
    <property type="project" value="UniProtKB-SubCell"/>
</dbReference>
<dbReference type="GO" id="GO:0008391">
    <property type="term" value="F:arachidonate monooxygenase activity"/>
    <property type="evidence" value="ECO:0000314"/>
    <property type="project" value="UniProtKB"/>
</dbReference>
<dbReference type="GO" id="GO:0052869">
    <property type="term" value="F:arachidonate omega-hydroxylase activity"/>
    <property type="evidence" value="ECO:0007669"/>
    <property type="project" value="RHEA"/>
</dbReference>
<dbReference type="GO" id="GO:0020037">
    <property type="term" value="F:heme binding"/>
    <property type="evidence" value="ECO:0000314"/>
    <property type="project" value="RGD"/>
</dbReference>
<dbReference type="GO" id="GO:0005506">
    <property type="term" value="F:iron ion binding"/>
    <property type="evidence" value="ECO:0007669"/>
    <property type="project" value="InterPro"/>
</dbReference>
<dbReference type="GO" id="GO:0050051">
    <property type="term" value="F:leukotriene-B4 20-monooxygenase activity"/>
    <property type="evidence" value="ECO:0000314"/>
    <property type="project" value="UniProtKB"/>
</dbReference>
<dbReference type="GO" id="GO:0019369">
    <property type="term" value="P:arachidonate metabolic process"/>
    <property type="evidence" value="ECO:0000318"/>
    <property type="project" value="GO_Central"/>
</dbReference>
<dbReference type="GO" id="GO:0036101">
    <property type="term" value="P:leukotriene B4 catabolic process"/>
    <property type="evidence" value="ECO:0000314"/>
    <property type="project" value="UniProtKB"/>
</dbReference>
<dbReference type="GO" id="GO:0097267">
    <property type="term" value="P:omega-hydroxylase P450 pathway"/>
    <property type="evidence" value="ECO:0000314"/>
    <property type="project" value="UniProtKB"/>
</dbReference>
<dbReference type="GO" id="GO:1905344">
    <property type="term" value="P:prostaglandin catabolic process"/>
    <property type="evidence" value="ECO:0000314"/>
    <property type="project" value="UniProtKB"/>
</dbReference>
<dbReference type="GO" id="GO:1904681">
    <property type="term" value="P:response to 3-methylcholanthrene"/>
    <property type="evidence" value="ECO:0000270"/>
    <property type="project" value="RGD"/>
</dbReference>
<dbReference type="CDD" id="cd20679">
    <property type="entry name" value="CYP4F"/>
    <property type="match status" value="1"/>
</dbReference>
<dbReference type="FunFam" id="1.10.630.10:FF:000005">
    <property type="entry name" value="cytochrome P450 4F22 isoform X2"/>
    <property type="match status" value="1"/>
</dbReference>
<dbReference type="Gene3D" id="1.10.630.10">
    <property type="entry name" value="Cytochrome P450"/>
    <property type="match status" value="1"/>
</dbReference>
<dbReference type="InterPro" id="IPR001128">
    <property type="entry name" value="Cyt_P450"/>
</dbReference>
<dbReference type="InterPro" id="IPR017972">
    <property type="entry name" value="Cyt_P450_CS"/>
</dbReference>
<dbReference type="InterPro" id="IPR002401">
    <property type="entry name" value="Cyt_P450_E_grp-I"/>
</dbReference>
<dbReference type="InterPro" id="IPR036396">
    <property type="entry name" value="Cyt_P450_sf"/>
</dbReference>
<dbReference type="InterPro" id="IPR050196">
    <property type="entry name" value="Cytochrome_P450_Monoox"/>
</dbReference>
<dbReference type="PANTHER" id="PTHR24291:SF198">
    <property type="entry name" value="CYTOCHROME P450 4F3"/>
    <property type="match status" value="1"/>
</dbReference>
<dbReference type="PANTHER" id="PTHR24291">
    <property type="entry name" value="CYTOCHROME P450 FAMILY 4"/>
    <property type="match status" value="1"/>
</dbReference>
<dbReference type="Pfam" id="PF00067">
    <property type="entry name" value="p450"/>
    <property type="match status" value="1"/>
</dbReference>
<dbReference type="PRINTS" id="PR00463">
    <property type="entry name" value="EP450I"/>
</dbReference>
<dbReference type="PRINTS" id="PR00385">
    <property type="entry name" value="P450"/>
</dbReference>
<dbReference type="SUPFAM" id="SSF48264">
    <property type="entry name" value="Cytochrome P450"/>
    <property type="match status" value="1"/>
</dbReference>
<dbReference type="PROSITE" id="PS00086">
    <property type="entry name" value="CYTOCHROME_P450"/>
    <property type="match status" value="1"/>
</dbReference>
<gene>
    <name evidence="6 10" type="primary">Cyp4f4</name>
</gene>
<reference key="1">
    <citation type="journal article" date="1995" name="Biochem. Biophys. Res. Commun.">
        <title>cDNA cloning of three new forms of rat brain cytochrome P450 belonging to the CYP4F subfamily.</title>
        <authorList>
            <person name="Kawashima H."/>
            <person name="Strobel H.W."/>
        </authorList>
    </citation>
    <scope>NUCLEOTIDE SEQUENCE [MRNA]</scope>
    <source>
        <strain>Sprague-Dawley</strain>
        <tissue>Brain</tissue>
    </source>
</reference>
<reference key="2">
    <citation type="journal article" date="1997" name="Arch. Biochem. Biophys.">
        <title>Protein expression, characterization, and regulation of CYP4F4 and CYP4F5 cloned from rat brain.</title>
        <authorList>
            <person name="Kawashima H."/>
            <person name="Kusunose E."/>
            <person name="Thompson C.M."/>
            <person name="Strobel H.W."/>
        </authorList>
    </citation>
    <scope>FUNCTION</scope>
    <scope>CATALYTIC ACTIVITY</scope>
    <scope>TISSUE SPECIFICITY</scope>
</reference>
<reference key="3">
    <citation type="journal article" date="2002" name="Biochemistry">
        <title>Covalent attachment of the heme prosthetic group in the CYP4F cytochrome P450 family.</title>
        <authorList>
            <person name="LeBrun L.A."/>
            <person name="Xu F."/>
            <person name="Kroetz D.L."/>
            <person name="Ortiz de Montellano P.R."/>
        </authorList>
    </citation>
    <scope>COVALENT HEME ATTACHMENT</scope>
</reference>
<reference key="4">
    <citation type="journal article" date="2004" name="J. Pharmacol. Exp. Ther.">
        <title>Catalytic activity and isoform-specific inhibition of rat cytochrome p450 4F enzymes.</title>
        <authorList>
            <person name="Xu F."/>
            <person name="Falck J.R."/>
            <person name="Ortiz de Montellano P.R."/>
            <person name="Kroetz D.L."/>
        </authorList>
    </citation>
    <scope>FUNCTION</scope>
    <scope>CATALYTIC ACTIVITY</scope>
    <scope>BIOPHYSICOCHEMICAL PROPERTIES</scope>
</reference>
<reference key="5">
    <citation type="journal article" date="2007" name="Arch. Biochem. Biophys.">
        <title>Catalytic characterization and cytokine mediated regulation of cytochrome P450 4Fs in rat hepatocytes.</title>
        <authorList>
            <person name="Kalsotra A."/>
            <person name="Anakk S."/>
            <person name="Brommer C.L."/>
            <person name="Kikuta Y."/>
            <person name="Morgan E.T."/>
            <person name="Strobel H.W."/>
        </authorList>
    </citation>
    <scope>FUNCTION</scope>
    <scope>CATALYTIC ACTIVITY</scope>
    <scope>BIOPHYSICOCHEMICAL PROPERTIES</scope>
    <scope>TISSUE SPECIFICITY</scope>
    <scope>INDUCTION BY CYTOKINES</scope>
</reference>
<feature type="chain" id="PRO_0000051852" description="Cytochrome P450 4F4">
    <location>
        <begin position="1"/>
        <end position="522"/>
    </location>
</feature>
<feature type="transmembrane region" description="Helical" evidence="1">
    <location>
        <begin position="15"/>
        <end position="35"/>
    </location>
</feature>
<feature type="transmembrane region" description="Helical" evidence="1">
    <location>
        <begin position="87"/>
        <end position="107"/>
    </location>
</feature>
<feature type="binding site" description="covalent" evidence="2">
    <location>
        <position position="328"/>
    </location>
    <ligand>
        <name>heme</name>
        <dbReference type="ChEBI" id="CHEBI:30413"/>
    </ligand>
</feature>
<feature type="binding site" description="axial binding residue" evidence="2">
    <location>
        <position position="468"/>
    </location>
    <ligand>
        <name>heme</name>
        <dbReference type="ChEBI" id="CHEBI:30413"/>
    </ligand>
    <ligandPart>
        <name>Fe</name>
        <dbReference type="ChEBI" id="CHEBI:18248"/>
    </ligandPart>
</feature>
<protein>
    <recommendedName>
        <fullName>Cytochrome P450 4F4</fullName>
    </recommendedName>
    <alternativeName>
        <fullName>CYPIVF4</fullName>
    </alternativeName>
    <alternativeName>
        <fullName>Leukotriene-B4 20-monooxygenase</fullName>
        <ecNumber evidence="3">1.14.14.94</ecNumber>
    </alternativeName>
</protein>
<comment type="function">
    <text evidence="3 4 5">A cytochrome P450 monooxygenase involved in the metabolism of arachidonic acid and its oxygenated derivatives (PubMed:14634044, PubMed:17418803, PubMed:9344476). Mechanistically, uses molecular oxygen inserting one oxygen atom into a substrate, and reducing the second into a water molecule, with two electrons provided by NADPH via cytochrome P450 reductase (CPR; NADPH-ferrihemoprotein reductase) (PubMed:14634044, PubMed:17418803, PubMed:9344476). Participates in the conversion of arachidonic acid to omega-hydroxyeicosatetraenoic acid (20-HETE), a signaling molecule acting both as vasoconstrictive and natriuretic with overall effect on arterial blood pressure (PubMed:14634044). Hydroxylates the terminal carbon (omega-hydroxylation) of inflammatory lipid mediators, including prostaglandin (PG) A1, PGE1 and leukotriene B4 (LTB4), and may play a role in inactivation of these oxylipins during the resolution of inflammation (PubMed:14634044, PubMed:17418803, PubMed:9344476).</text>
</comment>
<comment type="catalytic activity">
    <reaction evidence="3">
        <text>(5Z,8Z,11Z,14Z)-eicosatetraenoate + reduced [NADPH--hemoprotein reductase] + O2 = 20-hydroxy-(5Z,8Z,11Z,14Z)-eicosatetraenoate + oxidized [NADPH--hemoprotein reductase] + H2O + H(+)</text>
        <dbReference type="Rhea" id="RHEA:39755"/>
        <dbReference type="Rhea" id="RHEA-COMP:11964"/>
        <dbReference type="Rhea" id="RHEA-COMP:11965"/>
        <dbReference type="ChEBI" id="CHEBI:15377"/>
        <dbReference type="ChEBI" id="CHEBI:15378"/>
        <dbReference type="ChEBI" id="CHEBI:15379"/>
        <dbReference type="ChEBI" id="CHEBI:32395"/>
        <dbReference type="ChEBI" id="CHEBI:57618"/>
        <dbReference type="ChEBI" id="CHEBI:58210"/>
        <dbReference type="ChEBI" id="CHEBI:76624"/>
    </reaction>
    <physiologicalReaction direction="left-to-right" evidence="8">
        <dbReference type="Rhea" id="RHEA:39756"/>
    </physiologicalReaction>
</comment>
<comment type="catalytic activity">
    <reaction evidence="3 4 5">
        <text>leukotriene B4 + reduced [NADPH--hemoprotein reductase] + O2 = 20-hydroxy-leukotriene B4 + oxidized [NADPH--hemoprotein reductase] + H2O + H(+)</text>
        <dbReference type="Rhea" id="RHEA:22176"/>
        <dbReference type="Rhea" id="RHEA-COMP:11964"/>
        <dbReference type="Rhea" id="RHEA-COMP:11965"/>
        <dbReference type="ChEBI" id="CHEBI:15377"/>
        <dbReference type="ChEBI" id="CHEBI:15378"/>
        <dbReference type="ChEBI" id="CHEBI:15379"/>
        <dbReference type="ChEBI" id="CHEBI:57460"/>
        <dbReference type="ChEBI" id="CHEBI:57461"/>
        <dbReference type="ChEBI" id="CHEBI:57618"/>
        <dbReference type="ChEBI" id="CHEBI:58210"/>
        <dbReference type="EC" id="1.14.14.94"/>
    </reaction>
    <physiologicalReaction direction="left-to-right" evidence="8">
        <dbReference type="Rhea" id="RHEA:22177"/>
    </physiologicalReaction>
</comment>
<comment type="catalytic activity">
    <reaction evidence="4 5">
        <text>6-trans-leukotriene B4 + reduced [NADPH--hemoprotein reductase] + O2 = 20-hydroxy-6-trans-leukotriene B4 + oxidized [NADPH--hemoprotein reductase] + H2O + H(+)</text>
        <dbReference type="Rhea" id="RHEA:48676"/>
        <dbReference type="Rhea" id="RHEA-COMP:11964"/>
        <dbReference type="Rhea" id="RHEA-COMP:11965"/>
        <dbReference type="ChEBI" id="CHEBI:15377"/>
        <dbReference type="ChEBI" id="CHEBI:15378"/>
        <dbReference type="ChEBI" id="CHEBI:15379"/>
        <dbReference type="ChEBI" id="CHEBI:57618"/>
        <dbReference type="ChEBI" id="CHEBI:58210"/>
        <dbReference type="ChEBI" id="CHEBI:90723"/>
        <dbReference type="ChEBI" id="CHEBI:90732"/>
    </reaction>
    <physiologicalReaction direction="left-to-right" evidence="9">
        <dbReference type="Rhea" id="RHEA:48677"/>
    </physiologicalReaction>
</comment>
<comment type="catalytic activity">
    <reaction evidence="5">
        <text>prostaglandin A1 + reduced [NADPH--hemoprotein reductase] + O2 = 20-hydroxy prostaglandin A1 + oxidized [NADPH--hemoprotein reductase] + H2O + H(+)</text>
        <dbReference type="Rhea" id="RHEA:52524"/>
        <dbReference type="Rhea" id="RHEA-COMP:11964"/>
        <dbReference type="Rhea" id="RHEA-COMP:11965"/>
        <dbReference type="ChEBI" id="CHEBI:15377"/>
        <dbReference type="ChEBI" id="CHEBI:15378"/>
        <dbReference type="ChEBI" id="CHEBI:15379"/>
        <dbReference type="ChEBI" id="CHEBI:57398"/>
        <dbReference type="ChEBI" id="CHEBI:57618"/>
        <dbReference type="ChEBI" id="CHEBI:58210"/>
        <dbReference type="ChEBI" id="CHEBI:136663"/>
    </reaction>
    <physiologicalReaction direction="left-to-right" evidence="9">
        <dbReference type="Rhea" id="RHEA:52525"/>
    </physiologicalReaction>
</comment>
<comment type="catalytic activity">
    <reaction evidence="5">
        <text>prostaglandin E1 + reduced [NADPH--hemoprotein reductase] + O2 = 20-hydroxy prostaglandin E1 + oxidized [NADPH--hemoprotein reductase] + H2O + H(+)</text>
        <dbReference type="Rhea" id="RHEA:52520"/>
        <dbReference type="Rhea" id="RHEA-COMP:11964"/>
        <dbReference type="Rhea" id="RHEA-COMP:11965"/>
        <dbReference type="ChEBI" id="CHEBI:15377"/>
        <dbReference type="ChEBI" id="CHEBI:15378"/>
        <dbReference type="ChEBI" id="CHEBI:15379"/>
        <dbReference type="ChEBI" id="CHEBI:57397"/>
        <dbReference type="ChEBI" id="CHEBI:57618"/>
        <dbReference type="ChEBI" id="CHEBI:58210"/>
        <dbReference type="ChEBI" id="CHEBI:136661"/>
    </reaction>
    <physiologicalReaction direction="left-to-right" evidence="9">
        <dbReference type="Rhea" id="RHEA:52521"/>
    </physiologicalReaction>
</comment>
<comment type="cofactor">
    <cofactor evidence="2">
        <name>heme</name>
        <dbReference type="ChEBI" id="CHEBI:30413"/>
    </cofactor>
</comment>
<comment type="biophysicochemical properties">
    <kinetics>
        <KM evidence="3">31 uM for leukotriene B4</KM>
        <KM evidence="4">45.5 uM for leukotriene B4</KM>
        <Vmax evidence="3">40.0 nmol/min/nmol enzyme toward leukotriene B4</Vmax>
        <Vmax evidence="4">4.02 nmol/min/nmol enzyme toward leukotriene B4</Vmax>
    </kinetics>
</comment>
<comment type="subcellular location">
    <subcellularLocation>
        <location>Endoplasmic reticulum membrane</location>
        <topology evidence="1">Multi-pass membrane protein</topology>
    </subcellularLocation>
    <subcellularLocation>
        <location>Microsome membrane</location>
        <topology evidence="1">Multi-pass membrane protein</topology>
    </subcellularLocation>
</comment>
<comment type="tissue specificity">
    <text evidence="4 5">Expressed in hepatocytes (PubMed:17418803). High expression in liver and kidney. Lower expression in brain (PubMed:9344476).</text>
</comment>
<comment type="induction">
    <text evidence="4">Up-regulated in hepatocytes by pro-inflammatory cytokine IL6 and down-regulated by anti-inflammatory cytokine IL10.</text>
</comment>
<comment type="similarity">
    <text evidence="7">Belongs to the cytochrome P450 family.</text>
</comment>